<accession>P76069</accession>
<accession>A0A385XJG7</accession>
<accession>Q2MBD8</accession>
<protein>
    <recommendedName>
        <fullName>Protein YdaY</fullName>
    </recommendedName>
</protein>
<gene>
    <name type="primary">ydaY</name>
    <name type="ordered locus">b1366</name>
    <name type="ordered locus">JW1360</name>
</gene>
<comment type="interaction">
    <interactant intactId="EBI-545264">
        <id>P76069</id>
    </interactant>
    <interactant intactId="EBI-553061">
        <id>P22188</id>
        <label>murE</label>
    </interactant>
    <organismsDiffer>false</organismsDiffer>
    <experiments>3</experiments>
</comment>
<comment type="interaction">
    <interactant intactId="EBI-545264">
        <id>P76069</id>
    </interactant>
    <interactant intactId="EBI-545240">
        <id>P0A8A2</id>
        <label>yeeN</label>
    </interactant>
    <organismsDiffer>false</organismsDiffer>
    <experiments>2</experiments>
</comment>
<comment type="miscellaneous">
    <text evidence="1">Encoded in the Rac prophage.</text>
</comment>
<comment type="miscellaneous">
    <text evidence="2">Might be subject to ribosomal frameshifting.</text>
</comment>
<keyword id="KW-1185">Reference proteome</keyword>
<proteinExistence type="evidence at protein level"/>
<organism>
    <name type="scientific">Escherichia coli (strain K12)</name>
    <dbReference type="NCBI Taxonomy" id="83333"/>
    <lineage>
        <taxon>Bacteria</taxon>
        <taxon>Pseudomonadati</taxon>
        <taxon>Pseudomonadota</taxon>
        <taxon>Gammaproteobacteria</taxon>
        <taxon>Enterobacterales</taxon>
        <taxon>Enterobacteriaceae</taxon>
        <taxon>Escherichia</taxon>
    </lineage>
</organism>
<feature type="chain" id="PRO_0000168913" description="Protein YdaY">
    <location>
        <begin position="1"/>
        <end position="119"/>
    </location>
</feature>
<dbReference type="EMBL" id="U00096">
    <property type="protein sequence ID" value="AYC08205.1"/>
    <property type="molecule type" value="Genomic_DNA"/>
</dbReference>
<dbReference type="EMBL" id="AP009048">
    <property type="protein sequence ID" value="BAE76418.1"/>
    <property type="molecule type" value="Genomic_DNA"/>
</dbReference>
<dbReference type="PIR" id="A64887">
    <property type="entry name" value="A64887"/>
</dbReference>
<dbReference type="RefSeq" id="WP_000091628.1">
    <property type="nucleotide sequence ID" value="NZ_JACEFS010000049.1"/>
</dbReference>
<dbReference type="BioGRID" id="4260167">
    <property type="interactions" value="12"/>
</dbReference>
<dbReference type="DIP" id="DIP-11630N"/>
<dbReference type="FunCoup" id="P76069">
    <property type="interactions" value="148"/>
</dbReference>
<dbReference type="IntAct" id="P76069">
    <property type="interactions" value="16"/>
</dbReference>
<dbReference type="EnsemblBacteria" id="AYC08205">
    <property type="protein sequence ID" value="AYC08205"/>
    <property type="gene ID" value="b1366"/>
</dbReference>
<dbReference type="KEGG" id="ecj:JW1360"/>
<dbReference type="KEGG" id="ecoc:C3026_07980"/>
<dbReference type="PATRIC" id="fig|83333.103.peg.2181"/>
<dbReference type="EchoBASE" id="EB3150"/>
<dbReference type="eggNOG" id="ENOG5030C1N">
    <property type="taxonomic scope" value="Bacteria"/>
</dbReference>
<dbReference type="HOGENOM" id="CLU_137312_0_0_6"/>
<dbReference type="InParanoid" id="P76069"/>
<dbReference type="OMA" id="RRHIDKM"/>
<dbReference type="OrthoDB" id="6578842at2"/>
<dbReference type="BioCyc" id="EcoCyc:G6689-MONOMER"/>
<dbReference type="PRO" id="PR:P76069"/>
<dbReference type="Proteomes" id="UP000000625">
    <property type="component" value="Chromosome"/>
</dbReference>
<name>YDAY_ECOLI</name>
<evidence type="ECO:0000305" key="1"/>
<evidence type="ECO:0000305" key="2">
    <source>
    </source>
</evidence>
<sequence>MSRSSDNDQYRSRNALIRRHIEKMDASLHVGTKEFDISKVSEVDSVDDLLIDNAARYLLKDWKGVGELVNGVEVALEYTAERGIALLKQNPELYWQILAEAASIAQGKEQQKQDTIKKP</sequence>
<reference key="1">
    <citation type="journal article" date="1997" name="Science">
        <title>The complete genome sequence of Escherichia coli K-12.</title>
        <authorList>
            <person name="Blattner F.R."/>
            <person name="Plunkett G. III"/>
            <person name="Bloch C.A."/>
            <person name="Perna N.T."/>
            <person name="Burland V."/>
            <person name="Riley M."/>
            <person name="Collado-Vides J."/>
            <person name="Glasner J.D."/>
            <person name="Rode C.K."/>
            <person name="Mayhew G.F."/>
            <person name="Gregor J."/>
            <person name="Davis N.W."/>
            <person name="Kirkpatrick H.A."/>
            <person name="Goeden M.A."/>
            <person name="Rose D.J."/>
            <person name="Mau B."/>
            <person name="Shao Y."/>
        </authorList>
    </citation>
    <scope>NUCLEOTIDE SEQUENCE [LARGE SCALE GENOMIC DNA]</scope>
    <source>
        <strain>K12 / MG1655 / ATCC 47076</strain>
    </source>
</reference>
<reference key="2">
    <citation type="journal article" date="2006" name="Mol. Syst. Biol.">
        <title>Highly accurate genome sequences of Escherichia coli K-12 strains MG1655 and W3110.</title>
        <authorList>
            <person name="Hayashi K."/>
            <person name="Morooka N."/>
            <person name="Yamamoto Y."/>
            <person name="Fujita K."/>
            <person name="Isono K."/>
            <person name="Choi S."/>
            <person name="Ohtsubo E."/>
            <person name="Baba T."/>
            <person name="Wanner B.L."/>
            <person name="Mori H."/>
            <person name="Horiuchi T."/>
        </authorList>
    </citation>
    <scope>NUCLEOTIDE SEQUENCE [LARGE SCALE GENOMIC DNA]</scope>
    <source>
        <strain>K12 / W3110 / ATCC 27325 / DSM 5911</strain>
    </source>
</reference>
<reference key="3">
    <citation type="journal article" date="2003" name="EMBO J.">
        <title>Sequences that direct significant levels of frameshifting are frequent in coding regions of Escherichia coli.</title>
        <authorList>
            <person name="Gurvich O.L."/>
            <person name="Baranov P.V."/>
            <person name="Zhou J."/>
            <person name="Hammer A.W."/>
            <person name="Gesteland R.F."/>
            <person name="Atkins J.F."/>
        </authorList>
    </citation>
    <scope>DISCUSSION OF SEQUENCE</scope>
</reference>